<keyword id="KW-0002">3D-structure</keyword>
<keyword id="KW-0963">Cytoplasm</keyword>
<keyword id="KW-0217">Developmental protein</keyword>
<keyword id="KW-1185">Reference proteome</keyword>
<keyword id="KW-0677">Repeat</keyword>
<keyword id="KW-0346">Stress response</keyword>
<keyword id="KW-0802">TPR repeat</keyword>
<dbReference type="EMBL" id="FO080369">
    <property type="protein sequence ID" value="CCD63252.1"/>
    <property type="molecule type" value="Genomic_DNA"/>
</dbReference>
<dbReference type="PIR" id="T03899">
    <property type="entry name" value="T03899"/>
</dbReference>
<dbReference type="RefSeq" id="NP_001367444.1">
    <property type="nucleotide sequence ID" value="NM_001380593.3"/>
</dbReference>
<dbReference type="RefSeq" id="NP_503322.1">
    <property type="nucleotide sequence ID" value="NM_070921.6"/>
</dbReference>
<dbReference type="PDB" id="4GCN">
    <property type="method" value="X-ray"/>
    <property type="resolution" value="1.85 A"/>
    <property type="chains" value="A/B=1-124"/>
</dbReference>
<dbReference type="PDB" id="4GCO">
    <property type="method" value="X-ray"/>
    <property type="resolution" value="1.60 A"/>
    <property type="chains" value="A=131-253"/>
</dbReference>
<dbReference type="PDBsum" id="4GCN"/>
<dbReference type="PDBsum" id="4GCO"/>
<dbReference type="SMR" id="O16259"/>
<dbReference type="BioGRID" id="43661">
    <property type="interactions" value="25"/>
</dbReference>
<dbReference type="ComplexPortal" id="CPX-4003">
    <property type="entry name" value="Hsp90-sti-1 chaperone complex"/>
</dbReference>
<dbReference type="FunCoup" id="O16259">
    <property type="interactions" value="2645"/>
</dbReference>
<dbReference type="IntAct" id="O16259">
    <property type="interactions" value="22"/>
</dbReference>
<dbReference type="STRING" id="6239.R09E12.3.1"/>
<dbReference type="PaxDb" id="6239-R09E12.3"/>
<dbReference type="PeptideAtlas" id="O16259"/>
<dbReference type="EnsemblMetazoa" id="R09E12.3.1">
    <property type="protein sequence ID" value="R09E12.3.1"/>
    <property type="gene ID" value="WBGene00019983"/>
</dbReference>
<dbReference type="GeneID" id="178587"/>
<dbReference type="UCSC" id="R09E12.3">
    <property type="organism name" value="c. elegans"/>
</dbReference>
<dbReference type="AGR" id="WB:WBGene00019983"/>
<dbReference type="WormBase" id="R09E12.3">
    <property type="protein sequence ID" value="CE12646"/>
    <property type="gene ID" value="WBGene00019983"/>
    <property type="gene designation" value="sti-1"/>
</dbReference>
<dbReference type="eggNOG" id="KOG0548">
    <property type="taxonomic scope" value="Eukaryota"/>
</dbReference>
<dbReference type="GeneTree" id="ENSGT00940000170181"/>
<dbReference type="HOGENOM" id="CLU_000134_46_1_1"/>
<dbReference type="InParanoid" id="O16259"/>
<dbReference type="OMA" id="ECTTYTN"/>
<dbReference type="OrthoDB" id="2423701at2759"/>
<dbReference type="PhylomeDB" id="O16259"/>
<dbReference type="Reactome" id="R-CEL-3371497">
    <property type="pathway name" value="HSP90 chaperone cycle for steroid hormone receptors (SHR) in the presence of ligand"/>
</dbReference>
<dbReference type="EvolutionaryTrace" id="O16259"/>
<dbReference type="PRO" id="PR:O16259"/>
<dbReference type="Proteomes" id="UP000001940">
    <property type="component" value="Chromosome V"/>
</dbReference>
<dbReference type="Bgee" id="WBGene00019983">
    <property type="expression patterns" value="Expressed in pharyngeal muscle cell (C elegans) and 5 other cell types or tissues"/>
</dbReference>
<dbReference type="GO" id="GO:0005737">
    <property type="term" value="C:cytoplasm"/>
    <property type="evidence" value="ECO:0000314"/>
    <property type="project" value="WormBase"/>
</dbReference>
<dbReference type="GO" id="GO:0101031">
    <property type="term" value="C:protein folding chaperone complex"/>
    <property type="evidence" value="ECO:0000353"/>
    <property type="project" value="ComplexPortal"/>
</dbReference>
<dbReference type="GO" id="GO:0042030">
    <property type="term" value="F:ATPase inhibitor activity"/>
    <property type="evidence" value="ECO:0000314"/>
    <property type="project" value="WormBase"/>
</dbReference>
<dbReference type="GO" id="GO:0030544">
    <property type="term" value="F:Hsp70 protein binding"/>
    <property type="evidence" value="ECO:0000353"/>
    <property type="project" value="WormBase"/>
</dbReference>
<dbReference type="GO" id="GO:0051879">
    <property type="term" value="F:Hsp90 protein binding"/>
    <property type="evidence" value="ECO:0000353"/>
    <property type="project" value="WormBase"/>
</dbReference>
<dbReference type="GO" id="GO:0008340">
    <property type="term" value="P:determination of adult lifespan"/>
    <property type="evidence" value="ECO:0000315"/>
    <property type="project" value="WormBase"/>
</dbReference>
<dbReference type="GO" id="GO:0022414">
    <property type="term" value="P:reproductive process"/>
    <property type="evidence" value="ECO:0000315"/>
    <property type="project" value="WormBase"/>
</dbReference>
<dbReference type="GO" id="GO:0009408">
    <property type="term" value="P:response to heat"/>
    <property type="evidence" value="ECO:0000315"/>
    <property type="project" value="WormBase"/>
</dbReference>
<dbReference type="FunFam" id="1.25.40.10:FF:000010">
    <property type="entry name" value="Stress-induced phosphoprotein 1"/>
    <property type="match status" value="1"/>
</dbReference>
<dbReference type="FunFam" id="1.10.260.100:FF:000002">
    <property type="entry name" value="Stress-induced-phosphoprotein 1 (Hsp70/Hsp90-organizing)"/>
    <property type="match status" value="1"/>
</dbReference>
<dbReference type="FunFam" id="1.25.40.10:FF:000027">
    <property type="entry name" value="stress-induced-phosphoprotein 1 isoform X1"/>
    <property type="match status" value="1"/>
</dbReference>
<dbReference type="Gene3D" id="1.10.260.100">
    <property type="match status" value="1"/>
</dbReference>
<dbReference type="Gene3D" id="1.25.40.10">
    <property type="entry name" value="Tetratricopeptide repeat domain"/>
    <property type="match status" value="2"/>
</dbReference>
<dbReference type="InterPro" id="IPR041243">
    <property type="entry name" value="STI1/HOP_DP"/>
</dbReference>
<dbReference type="InterPro" id="IPR006636">
    <property type="entry name" value="STI1_HS-bd"/>
</dbReference>
<dbReference type="InterPro" id="IPR011990">
    <property type="entry name" value="TPR-like_helical_dom_sf"/>
</dbReference>
<dbReference type="InterPro" id="IPR019734">
    <property type="entry name" value="TPR_rpt"/>
</dbReference>
<dbReference type="PANTHER" id="PTHR22904:SF523">
    <property type="entry name" value="STRESS-INDUCED-PHOSPHOPROTEIN 1"/>
    <property type="match status" value="1"/>
</dbReference>
<dbReference type="PANTHER" id="PTHR22904">
    <property type="entry name" value="TPR REPEAT CONTAINING PROTEIN"/>
    <property type="match status" value="1"/>
</dbReference>
<dbReference type="Pfam" id="PF17830">
    <property type="entry name" value="STI1-HOP_DP"/>
    <property type="match status" value="1"/>
</dbReference>
<dbReference type="Pfam" id="PF13414">
    <property type="entry name" value="TPR_11"/>
    <property type="match status" value="2"/>
</dbReference>
<dbReference type="SMART" id="SM00727">
    <property type="entry name" value="STI1"/>
    <property type="match status" value="1"/>
</dbReference>
<dbReference type="SMART" id="SM00028">
    <property type="entry name" value="TPR"/>
    <property type="match status" value="6"/>
</dbReference>
<dbReference type="SUPFAM" id="SSF48452">
    <property type="entry name" value="TPR-like"/>
    <property type="match status" value="2"/>
</dbReference>
<dbReference type="PROSITE" id="PS50005">
    <property type="entry name" value="TPR"/>
    <property type="match status" value="6"/>
</dbReference>
<dbReference type="PROSITE" id="PS50293">
    <property type="entry name" value="TPR_REGION"/>
    <property type="match status" value="1"/>
</dbReference>
<proteinExistence type="evidence at protein level"/>
<accession>O16259</accession>
<organism>
    <name type="scientific">Caenorhabditis elegans</name>
    <dbReference type="NCBI Taxonomy" id="6239"/>
    <lineage>
        <taxon>Eukaryota</taxon>
        <taxon>Metazoa</taxon>
        <taxon>Ecdysozoa</taxon>
        <taxon>Nematoda</taxon>
        <taxon>Chromadorea</taxon>
        <taxon>Rhabditida</taxon>
        <taxon>Rhabditina</taxon>
        <taxon>Rhabditomorpha</taxon>
        <taxon>Rhabditoidea</taxon>
        <taxon>Rhabditidae</taxon>
        <taxon>Peloderinae</taxon>
        <taxon>Caenorhabditis</taxon>
    </lineage>
</organism>
<evidence type="ECO:0000255" key="1"/>
<evidence type="ECO:0000256" key="2">
    <source>
        <dbReference type="SAM" id="MobiDB-lite"/>
    </source>
</evidence>
<evidence type="ECO:0000269" key="3">
    <source>
    </source>
</evidence>
<evidence type="ECO:0000269" key="4">
    <source>
    </source>
</evidence>
<evidence type="ECO:0000303" key="5">
    <source>
    </source>
</evidence>
<evidence type="ECO:0000303" key="6">
    <source>
    </source>
</evidence>
<evidence type="ECO:0000305" key="7"/>
<evidence type="ECO:0000312" key="8">
    <source>
        <dbReference type="EMBL" id="CCD63252.1"/>
    </source>
</evidence>
<evidence type="ECO:0000312" key="9">
    <source>
        <dbReference type="PDB" id="4GCN"/>
    </source>
</evidence>
<evidence type="ECO:0000312" key="10">
    <source>
        <dbReference type="WormBase" id="R09E12.3"/>
    </source>
</evidence>
<evidence type="ECO:0007829" key="11">
    <source>
        <dbReference type="PDB" id="4GCN"/>
    </source>
</evidence>
<evidence type="ECO:0007829" key="12">
    <source>
        <dbReference type="PDB" id="4GCO"/>
    </source>
</evidence>
<name>STIP1_CAEEL</name>
<reference evidence="8" key="1">
    <citation type="journal article" date="1998" name="Science">
        <title>Genome sequence of the nematode C. elegans: a platform for investigating biology.</title>
        <authorList>
            <consortium name="The C. elegans sequencing consortium"/>
        </authorList>
    </citation>
    <scope>NUCLEOTIDE SEQUENCE [LARGE SCALE GENOMIC DNA]</scope>
    <source>
        <strain evidence="8">Bristol N2</strain>
    </source>
</reference>
<reference evidence="7" key="2">
    <citation type="journal article" date="2009" name="J. Mol. Biol.">
        <title>C. elegans STI-1, the homolog of Sti1/Hop, is involved in aging and stress response.</title>
        <authorList>
            <person name="Song H.O."/>
            <person name="Lee W."/>
            <person name="An K."/>
            <person name="Lee H.S."/>
            <person name="Cho J.H."/>
            <person name="Park Z.Y."/>
            <person name="Ahnn J."/>
        </authorList>
    </citation>
    <scope>IDENTIFICATION BY MASS SPECTROMETRY</scope>
    <scope>FUNCTION</scope>
    <scope>INTERACTION WITH HSP-1 AND DAF-21</scope>
    <scope>SUBCELLULAR LOCATION</scope>
    <scope>TISSUE SPECIFICITY</scope>
    <scope>DEVELOPMENTAL STAGE</scope>
    <scope>INDUCTION</scope>
    <scope>DISRUPTION PHENOTYPE</scope>
</reference>
<reference evidence="7" key="3">
    <citation type="journal article" date="2009" name="J. Mol. Biol.">
        <title>The non-canonical Hop protein from Caenorhabditis elegans exerts essential functions and forms binary complexes with either Hsc70 or Hsp90.</title>
        <authorList>
            <person name="Gaiser A.M."/>
            <person name="Brandt F."/>
            <person name="Richter K."/>
        </authorList>
    </citation>
    <scope>FUNCTION</scope>
    <scope>INTERACTION WITH HSP-1 AND DAF-21</scope>
    <scope>TISSUE SPECIFICITY</scope>
    <scope>DISRUPTION PHENOTYPE</scope>
</reference>
<reference evidence="9" key="4">
    <citation type="submission" date="2012-07" db="PDB data bank">
        <authorList>
            <consortium name="Midwest center for structural genomics (MCSG)"/>
        </authorList>
    </citation>
    <scope>X-RAY CRYSTALLOGRAPHY (1.60 ANGSTROMS) OF 1-124 AND 131-253</scope>
</reference>
<protein>
    <recommendedName>
        <fullName evidence="5 8">Stress-induced-phosphoprotein 1</fullName>
        <shortName evidence="5">CeSTI1</shortName>
        <shortName evidence="5">STI1</shortName>
    </recommendedName>
    <alternativeName>
        <fullName evidence="6">Hsc70/Hsp90-organizing protein</fullName>
        <shortName evidence="6">CeHop</shortName>
        <shortName evidence="6">Hop</shortName>
    </alternativeName>
</protein>
<comment type="function">
    <text evidence="3 4">Plays a role in gonad development. Up-regulates longevity and thermotolerance. Binds daf-21/hsp90 and inhibits its ATPase activity.</text>
</comment>
<comment type="subunit">
    <text evidence="3 4">Forms a complex with hsp-1/hsp70 and daf-21/hsp90. Interacts with daf-21/hsp90 (via the C-terminal MEEVD pentapeptide).</text>
</comment>
<comment type="interaction">
    <interactant intactId="EBI-6514174">
        <id>O16259</id>
    </interactant>
    <interactant intactId="EBI-313329">
        <id>Q18688</id>
        <label>daf-21</label>
    </interactant>
    <organismsDiffer>false</organismsDiffer>
    <experiments>3</experiments>
</comment>
<comment type="interaction">
    <interactant intactId="EBI-6514174">
        <id>O16259</id>
    </interactant>
    <interactant intactId="EBI-322448">
        <id>P09446</id>
        <label>hsp-1</label>
    </interactant>
    <organismsDiffer>false</organismsDiffer>
    <experiments>3</experiments>
</comment>
<comment type="subcellular location">
    <subcellularLocation>
        <location evidence="3">Cytoplasm</location>
    </subcellularLocation>
    <text evidence="3">Detected in cytoplasm in early-stage embryos.</text>
</comment>
<comment type="tissue specificity">
    <text evidence="3 4">Expressed ubiquitously in the whole body. Detected predominantly in the pharyngeal muscles, vulva epithelial cells, striated body-wall muscles, spermathecae and intestinal cell ring. Also observed in the tail regions of hermaphrodite and in the sensory rays and spicules of males.</text>
</comment>
<comment type="developmental stage">
    <text evidence="3">Expressed at all developmental stages.</text>
</comment>
<comment type="induction">
    <text evidence="3">Up-regulated by heat stress (at protein level).</text>
</comment>
<comment type="disruption phenotype">
    <text evidence="3 4">Reduced brood size and decreased fertility under heat stress. Decreased thermotolerance and shortening of life span by 68% and 77% at 20 degrees Celsius and 25 degrees Celsius respectively. Growth of gonads is hampered resulting in shortened arms of the gonads, abnormally shaped spermathecae, lower sperm number and endomitotic oocyte development.</text>
</comment>
<gene>
    <name evidence="8 10" type="primary">sti-1</name>
    <name type="ORF">R09E12.3</name>
</gene>
<feature type="chain" id="PRO_0000422047" description="Stress-induced-phosphoprotein 1">
    <location>
        <begin position="1"/>
        <end position="320"/>
    </location>
</feature>
<feature type="repeat" description="TPR 1" evidence="1">
    <location>
        <begin position="5"/>
        <end position="38"/>
    </location>
</feature>
<feature type="repeat" description="TPR 2" evidence="1">
    <location>
        <begin position="40"/>
        <end position="72"/>
    </location>
</feature>
<feature type="repeat" description="TPR 3" evidence="1">
    <location>
        <begin position="80"/>
        <end position="113"/>
    </location>
</feature>
<feature type="repeat" description="TPR 4" evidence="1">
    <location>
        <begin position="140"/>
        <end position="173"/>
    </location>
</feature>
<feature type="repeat" description="TPR 5" evidence="1">
    <location>
        <begin position="175"/>
        <end position="207"/>
    </location>
</feature>
<feature type="repeat" description="TPR 6" evidence="1">
    <location>
        <begin position="208"/>
        <end position="241"/>
    </location>
</feature>
<feature type="domain" description="STI1" evidence="1">
    <location>
        <begin position="269"/>
        <end position="308"/>
    </location>
</feature>
<feature type="region of interest" description="Disordered" evidence="2">
    <location>
        <begin position="241"/>
        <end position="269"/>
    </location>
</feature>
<feature type="compositionally biased region" description="Basic and acidic residues" evidence="2">
    <location>
        <begin position="242"/>
        <end position="269"/>
    </location>
</feature>
<feature type="helix" evidence="11">
    <location>
        <begin position="1"/>
        <end position="17"/>
    </location>
</feature>
<feature type="helix" evidence="11">
    <location>
        <begin position="21"/>
        <end position="34"/>
    </location>
</feature>
<feature type="helix" evidence="11">
    <location>
        <begin position="39"/>
        <end position="51"/>
    </location>
</feature>
<feature type="helix" evidence="11">
    <location>
        <begin position="55"/>
        <end position="71"/>
    </location>
</feature>
<feature type="helix" evidence="11">
    <location>
        <begin position="76"/>
        <end position="92"/>
    </location>
</feature>
<feature type="helix" evidence="11">
    <location>
        <begin position="96"/>
        <end position="109"/>
    </location>
</feature>
<feature type="helix" evidence="11">
    <location>
        <begin position="113"/>
        <end position="123"/>
    </location>
</feature>
<feature type="helix" evidence="12">
    <location>
        <begin position="137"/>
        <end position="152"/>
    </location>
</feature>
<feature type="helix" evidence="12">
    <location>
        <begin position="156"/>
        <end position="169"/>
    </location>
</feature>
<feature type="helix" evidence="12">
    <location>
        <begin position="174"/>
        <end position="186"/>
    </location>
</feature>
<feature type="helix" evidence="12">
    <location>
        <begin position="190"/>
        <end position="203"/>
    </location>
</feature>
<feature type="helix" evidence="12">
    <location>
        <begin position="208"/>
        <end position="220"/>
    </location>
</feature>
<feature type="helix" evidence="12">
    <location>
        <begin position="224"/>
        <end position="237"/>
    </location>
</feature>
<feature type="helix" evidence="12">
    <location>
        <begin position="242"/>
        <end position="251"/>
    </location>
</feature>
<sequence>MTDAAIAEKDLGNAAYKQKDFEKAHVHYDKAIELDPSNITFYNNKAAVYFEEKKFAECVQFCEKAVEVGRETRADYKLIAKAMSRAGNAFQKQNDLSLAVQWFHRSLSEFRDPELVKKVKELEKQLKAAERLAYINPELAQEEKNKGNEYFKKGDYPTAMRHYNEAVKRDPENAILYSNRAACLTKLMEFQRALDDCDTCIRLDSKFIKGYIRKAACLVAMREWSKAQRAYEDALQVDPSNEEAREGVRNCLRSNDEDPEKAKERSLADPEVQEILRDPGMRMILEQMSNDPGAVREHLKNPEIFQKLMKLRDAGVIQMR</sequence>